<gene>
    <name type="ordered locus">MT1774</name>
</gene>
<comment type="subcellular location">
    <subcellularLocation>
        <location evidence="3">Cell membrane</location>
        <topology evidence="3">Multi-pass membrane protein</topology>
    </subcellularLocation>
</comment>
<comment type="induction">
    <text evidence="2">A member of the dormancy regulon. Induced in response to reduced oxygen tension (hypoxia) and low levels of nitric oxide (NO).</text>
</comment>
<comment type="sequence caution" evidence="3">
    <conflict type="erroneous initiation">
        <sequence resource="EMBL-CDS" id="AAK46047"/>
    </conflict>
</comment>
<proteinExistence type="evidence at transcript level"/>
<protein>
    <recommendedName>
        <fullName>Probable membrane protein MT1774</fullName>
    </recommendedName>
</protein>
<name>Y1733_MYCTO</name>
<dbReference type="EMBL" id="AE000516">
    <property type="protein sequence ID" value="AAK46047.1"/>
    <property type="status" value="ALT_INIT"/>
    <property type="molecule type" value="Genomic_DNA"/>
</dbReference>
<dbReference type="PIR" id="H70687">
    <property type="entry name" value="H70687"/>
</dbReference>
<dbReference type="RefSeq" id="WP_003898990.1">
    <property type="nucleotide sequence ID" value="NZ_KK341227.1"/>
</dbReference>
<dbReference type="KEGG" id="mtc:MT1774"/>
<dbReference type="PATRIC" id="fig|83331.31.peg.1903"/>
<dbReference type="HOGENOM" id="CLU_084215_0_1_11"/>
<dbReference type="Proteomes" id="UP000001020">
    <property type="component" value="Chromosome"/>
</dbReference>
<dbReference type="GO" id="GO:0005886">
    <property type="term" value="C:plasma membrane"/>
    <property type="evidence" value="ECO:0007669"/>
    <property type="project" value="UniProtKB-SubCell"/>
</dbReference>
<dbReference type="InterPro" id="IPR039708">
    <property type="entry name" value="MT1774/Rv1733c-like"/>
</dbReference>
<dbReference type="PANTHER" id="PTHR42305">
    <property type="entry name" value="MEMBRANE PROTEIN RV1733C-RELATED"/>
    <property type="match status" value="1"/>
</dbReference>
<dbReference type="PANTHER" id="PTHR42305:SF1">
    <property type="entry name" value="MEMBRANE PROTEIN RV1733C-RELATED"/>
    <property type="match status" value="1"/>
</dbReference>
<accession>P9WLS8</accession>
<accession>L0TA85</accession>
<accession>P71991</accession>
<accession>Q8VJY0</accession>
<organism>
    <name type="scientific">Mycobacterium tuberculosis (strain CDC 1551 / Oshkosh)</name>
    <dbReference type="NCBI Taxonomy" id="83331"/>
    <lineage>
        <taxon>Bacteria</taxon>
        <taxon>Bacillati</taxon>
        <taxon>Actinomycetota</taxon>
        <taxon>Actinomycetes</taxon>
        <taxon>Mycobacteriales</taxon>
        <taxon>Mycobacteriaceae</taxon>
        <taxon>Mycobacterium</taxon>
        <taxon>Mycobacterium tuberculosis complex</taxon>
    </lineage>
</organism>
<sequence>MIATTRDREGATMITFRLRLPCRTILRVFSRNSLVRGTDRLEAVVMLLAVTVSLLTIPFAAAAGTAVHDSRSHVYAHQAQTRHPATATVIDHEGVIDSNTTATSAPPRTKITVPARWVVNGIERSGEVNAKPGTKSGDRVGIWVDSAGQLVDEPAPPARAIADAALAALGLWLSVAAVAGALLALTRAILIRVRNASWQHDIDSLFCTQR</sequence>
<feature type="chain" id="PRO_0000427426" description="Probable membrane protein MT1774">
    <location>
        <begin position="1"/>
        <end position="210"/>
    </location>
</feature>
<feature type="transmembrane region" description="Helical" evidence="1">
    <location>
        <begin position="43"/>
        <end position="63"/>
    </location>
</feature>
<feature type="transmembrane region" description="Helical" evidence="1">
    <location>
        <begin position="165"/>
        <end position="185"/>
    </location>
</feature>
<reference key="1">
    <citation type="journal article" date="2002" name="J. Bacteriol.">
        <title>Whole-genome comparison of Mycobacterium tuberculosis clinical and laboratory strains.</title>
        <authorList>
            <person name="Fleischmann R.D."/>
            <person name="Alland D."/>
            <person name="Eisen J.A."/>
            <person name="Carpenter L."/>
            <person name="White O."/>
            <person name="Peterson J.D."/>
            <person name="DeBoy R.T."/>
            <person name="Dodson R.J."/>
            <person name="Gwinn M.L."/>
            <person name="Haft D.H."/>
            <person name="Hickey E.K."/>
            <person name="Kolonay J.F."/>
            <person name="Nelson W.C."/>
            <person name="Umayam L.A."/>
            <person name="Ermolaeva M.D."/>
            <person name="Salzberg S.L."/>
            <person name="Delcher A."/>
            <person name="Utterback T.R."/>
            <person name="Weidman J.F."/>
            <person name="Khouri H.M."/>
            <person name="Gill J."/>
            <person name="Mikula A."/>
            <person name="Bishai W."/>
            <person name="Jacobs W.R. Jr."/>
            <person name="Venter J.C."/>
            <person name="Fraser C.M."/>
        </authorList>
    </citation>
    <scope>NUCLEOTIDE SEQUENCE [LARGE SCALE GENOMIC DNA]</scope>
    <source>
        <strain>CDC 1551 / Oshkosh</strain>
    </source>
</reference>
<reference key="2">
    <citation type="journal article" date="2003" name="J. Exp. Med.">
        <title>Inhibition of respiration by nitric oxide induces a Mycobacterium tuberculosis dormancy program.</title>
        <authorList>
            <person name="Voskuil M.I."/>
            <person name="Schnappinger D."/>
            <person name="Visconti K.C."/>
            <person name="Harrell M.I."/>
            <person name="Dolganov G.M."/>
            <person name="Sherman D.R."/>
            <person name="Schoolnik G.K."/>
        </authorList>
    </citation>
    <scope>INDUCTION BY NITRIC OXIDE (NO) AND BY HYPOXIA</scope>
    <scope>DORMANCY REGULON</scope>
    <source>
        <strain>CDC 1551 / Oshkosh</strain>
    </source>
</reference>
<keyword id="KW-1003">Cell membrane</keyword>
<keyword id="KW-0472">Membrane</keyword>
<keyword id="KW-1185">Reference proteome</keyword>
<keyword id="KW-0812">Transmembrane</keyword>
<keyword id="KW-1133">Transmembrane helix</keyword>
<evidence type="ECO:0000255" key="1"/>
<evidence type="ECO:0000269" key="2">
    <source>
    </source>
</evidence>
<evidence type="ECO:0000305" key="3"/>